<geneLocation type="chloroplast"/>
<name>RR9_STIHE</name>
<gene>
    <name type="primary">rps9</name>
</gene>
<evidence type="ECO:0000305" key="1"/>
<proteinExistence type="inferred from homology"/>
<protein>
    <recommendedName>
        <fullName evidence="1">Small ribosomal subunit protein uS9c</fullName>
    </recommendedName>
    <alternativeName>
        <fullName>30S ribosomal protein S9, chloroplastic</fullName>
    </alternativeName>
</protein>
<feature type="chain" id="PRO_0000277076" description="Small ribosomal subunit protein uS9c">
    <location>
        <begin position="1"/>
        <end position="142"/>
    </location>
</feature>
<dbReference type="EMBL" id="DQ630521">
    <property type="protein sequence ID" value="ABF60201.1"/>
    <property type="molecule type" value="Genomic_DNA"/>
</dbReference>
<dbReference type="RefSeq" id="YP_764410.1">
    <property type="nucleotide sequence ID" value="NC_008372.1"/>
</dbReference>
<dbReference type="SMR" id="Q06SF6"/>
<dbReference type="GeneID" id="4308432"/>
<dbReference type="GO" id="GO:0009507">
    <property type="term" value="C:chloroplast"/>
    <property type="evidence" value="ECO:0007669"/>
    <property type="project" value="UniProtKB-SubCell"/>
</dbReference>
<dbReference type="GO" id="GO:0015935">
    <property type="term" value="C:small ribosomal subunit"/>
    <property type="evidence" value="ECO:0007669"/>
    <property type="project" value="TreeGrafter"/>
</dbReference>
<dbReference type="GO" id="GO:0003723">
    <property type="term" value="F:RNA binding"/>
    <property type="evidence" value="ECO:0007669"/>
    <property type="project" value="TreeGrafter"/>
</dbReference>
<dbReference type="GO" id="GO:0003735">
    <property type="term" value="F:structural constituent of ribosome"/>
    <property type="evidence" value="ECO:0007669"/>
    <property type="project" value="InterPro"/>
</dbReference>
<dbReference type="GO" id="GO:0006412">
    <property type="term" value="P:translation"/>
    <property type="evidence" value="ECO:0007669"/>
    <property type="project" value="UniProtKB-UniRule"/>
</dbReference>
<dbReference type="Gene3D" id="3.30.230.10">
    <property type="match status" value="1"/>
</dbReference>
<dbReference type="HAMAP" id="MF_00532_B">
    <property type="entry name" value="Ribosomal_uS9_B"/>
    <property type="match status" value="1"/>
</dbReference>
<dbReference type="InterPro" id="IPR020568">
    <property type="entry name" value="Ribosomal_Su5_D2-typ_SF"/>
</dbReference>
<dbReference type="InterPro" id="IPR000754">
    <property type="entry name" value="Ribosomal_uS9"/>
</dbReference>
<dbReference type="InterPro" id="IPR023035">
    <property type="entry name" value="Ribosomal_uS9_bac/plastid"/>
</dbReference>
<dbReference type="InterPro" id="IPR020574">
    <property type="entry name" value="Ribosomal_uS9_CS"/>
</dbReference>
<dbReference type="InterPro" id="IPR014721">
    <property type="entry name" value="Ribsml_uS5_D2-typ_fold_subgr"/>
</dbReference>
<dbReference type="NCBIfam" id="NF001099">
    <property type="entry name" value="PRK00132.1"/>
    <property type="match status" value="1"/>
</dbReference>
<dbReference type="PANTHER" id="PTHR21569">
    <property type="entry name" value="RIBOSOMAL PROTEIN S9"/>
    <property type="match status" value="1"/>
</dbReference>
<dbReference type="PANTHER" id="PTHR21569:SF1">
    <property type="entry name" value="SMALL RIBOSOMAL SUBUNIT PROTEIN US9M"/>
    <property type="match status" value="1"/>
</dbReference>
<dbReference type="Pfam" id="PF00380">
    <property type="entry name" value="Ribosomal_S9"/>
    <property type="match status" value="1"/>
</dbReference>
<dbReference type="SUPFAM" id="SSF54211">
    <property type="entry name" value="Ribosomal protein S5 domain 2-like"/>
    <property type="match status" value="1"/>
</dbReference>
<dbReference type="PROSITE" id="PS00360">
    <property type="entry name" value="RIBOSOMAL_S9"/>
    <property type="match status" value="1"/>
</dbReference>
<accession>Q06SF6</accession>
<sequence length="142" mass="15775">MSQKLYILAKGIGRRKEAVAQVQLLAGSGQFIINGLPANLYLQEDPRSILAIDAPFKQLHVDHSADKDSLQTLDTIVKVQGGGKIGQANAIKLGVARALCEFNGEYRKSLKDSGFLTQDSRIKERRKYGLKKARKAPQYHKR</sequence>
<reference key="1">
    <citation type="journal article" date="2006" name="Mol. Genet. Genomics">
        <title>Distinctive architecture of the chloroplast genome in the chlorophycean green alga Stigeoclonium helveticum.</title>
        <authorList>
            <person name="Belanger A.-S."/>
            <person name="Brouard J.-S."/>
            <person name="Charlebois P."/>
            <person name="Otis C."/>
            <person name="Lemieux C."/>
            <person name="Turmel M."/>
        </authorList>
    </citation>
    <scope>NUCLEOTIDE SEQUENCE [LARGE SCALE GENOMIC DNA]</scope>
    <source>
        <strain>UTEX 441</strain>
    </source>
</reference>
<comment type="subcellular location">
    <subcellularLocation>
        <location>Plastid</location>
        <location>Chloroplast</location>
    </subcellularLocation>
</comment>
<comment type="similarity">
    <text evidence="1">Belongs to the universal ribosomal protein uS9 family.</text>
</comment>
<keyword id="KW-0150">Chloroplast</keyword>
<keyword id="KW-0934">Plastid</keyword>
<keyword id="KW-0687">Ribonucleoprotein</keyword>
<keyword id="KW-0689">Ribosomal protein</keyword>
<organism>
    <name type="scientific">Stigeoclonium helveticum</name>
    <name type="common">Green alga</name>
    <dbReference type="NCBI Taxonomy" id="55999"/>
    <lineage>
        <taxon>Eukaryota</taxon>
        <taxon>Viridiplantae</taxon>
        <taxon>Chlorophyta</taxon>
        <taxon>core chlorophytes</taxon>
        <taxon>Chlorophyceae</taxon>
        <taxon>OCC clade</taxon>
        <taxon>Chaetophorales</taxon>
        <taxon>Chaetophoraceae</taxon>
        <taxon>Stigeoclonium</taxon>
    </lineage>
</organism>